<comment type="function">
    <text evidence="1">Large subunit of the glutamine-dependent carbamoyl phosphate synthetase (CPSase). CPSase catalyzes the formation of carbamoyl phosphate from the ammonia moiety of glutamine, carbonate, and phosphate donated by ATP, constituting the first step of 2 biosynthetic pathways, one leading to arginine and/or urea and the other to pyrimidine nucleotides. The large subunit (synthetase) binds the substrates ammonia (free or transferred from glutamine from the small subunit), hydrogencarbonate and ATP and carries out an ATP-coupled ligase reaction, activating hydrogencarbonate by forming carboxy phosphate which reacts with ammonia to form carbamoyl phosphate.</text>
</comment>
<comment type="catalytic activity">
    <reaction evidence="1">
        <text>hydrogencarbonate + L-glutamine + 2 ATP + H2O = carbamoyl phosphate + L-glutamate + 2 ADP + phosphate + 2 H(+)</text>
        <dbReference type="Rhea" id="RHEA:18633"/>
        <dbReference type="ChEBI" id="CHEBI:15377"/>
        <dbReference type="ChEBI" id="CHEBI:15378"/>
        <dbReference type="ChEBI" id="CHEBI:17544"/>
        <dbReference type="ChEBI" id="CHEBI:29985"/>
        <dbReference type="ChEBI" id="CHEBI:30616"/>
        <dbReference type="ChEBI" id="CHEBI:43474"/>
        <dbReference type="ChEBI" id="CHEBI:58228"/>
        <dbReference type="ChEBI" id="CHEBI:58359"/>
        <dbReference type="ChEBI" id="CHEBI:456216"/>
        <dbReference type="EC" id="6.3.5.5"/>
    </reaction>
</comment>
<comment type="catalytic activity">
    <reaction evidence="1">
        <text>hydrogencarbonate + NH4(+) + 2 ATP = carbamoyl phosphate + 2 ADP + phosphate + 2 H(+)</text>
        <dbReference type="Rhea" id="RHEA:18029"/>
        <dbReference type="ChEBI" id="CHEBI:15378"/>
        <dbReference type="ChEBI" id="CHEBI:17544"/>
        <dbReference type="ChEBI" id="CHEBI:28938"/>
        <dbReference type="ChEBI" id="CHEBI:30616"/>
        <dbReference type="ChEBI" id="CHEBI:43474"/>
        <dbReference type="ChEBI" id="CHEBI:58228"/>
        <dbReference type="ChEBI" id="CHEBI:456216"/>
        <dbReference type="EC" id="6.3.4.16"/>
    </reaction>
</comment>
<comment type="cofactor">
    <cofactor evidence="1">
        <name>Mg(2+)</name>
        <dbReference type="ChEBI" id="CHEBI:18420"/>
    </cofactor>
    <cofactor evidence="1">
        <name>Mn(2+)</name>
        <dbReference type="ChEBI" id="CHEBI:29035"/>
    </cofactor>
    <text evidence="3">Binds 2 Mg(2+) or Mn(2+) ions per subunit.</text>
</comment>
<comment type="pathway">
    <text evidence="1">Amino-acid biosynthesis; L-arginine biosynthesis; carbamoyl phosphate from bicarbonate: step 1/1.</text>
</comment>
<comment type="pathway">
    <text evidence="1">Pyrimidine metabolism; UMP biosynthesis via de novo pathway; (S)-dihydroorotate from bicarbonate: step 1/3.</text>
</comment>
<comment type="subunit">
    <text evidence="1">Composed of two chains; the small (or glutamine) chain promotes the hydrolysis of glutamine to ammonia, which is used by the large (or ammonia) chain to synthesize carbamoyl phosphate. Tetramer of heterodimers (alpha,beta)4.</text>
</comment>
<comment type="domain">
    <text>Corresponds to the N-terminal section.</text>
</comment>
<comment type="domain">
    <text evidence="1">The large subunit is composed of 2 ATP-grasp domains that are involved in binding the 2 ATP molecules needed for carbamoyl phosphate synthesis. The N-terminal ATP-grasp domain (referred to as the carboxyphosphate synthetic component) catalyzes the ATP-dependent phosphorylation of hydrogencarbonate to carboxyphosphate and the subsequent nucleophilic attack by ammonia to form a carbamate intermediate. The C-terminal ATP-grasp domain (referred to as the carbamoyl phosphate synthetic component) then catalyzes the phosphorylation of carbamate with the second ATP to form the end product carbamoyl phosphate. The reactive and unstable enzyme intermediates are sequentially channeled from one active site to the next through the interior of the protein over a distance of at least 96 A.</text>
</comment>
<comment type="similarity">
    <text evidence="3">Belongs to the CarB family.</text>
</comment>
<comment type="caution">
    <text evidence="3">CarB is split into two genes in A.aeolicus (AQ_1172 and AQ_2101).</text>
</comment>
<proteinExistence type="inferred from homology"/>
<reference key="1">
    <citation type="journal article" date="1998" name="Nature">
        <title>The complete genome of the hyperthermophilic bacterium Aquifex aeolicus.</title>
        <authorList>
            <person name="Deckert G."/>
            <person name="Warren P.V."/>
            <person name="Gaasterland T."/>
            <person name="Young W.G."/>
            <person name="Lenox A.L."/>
            <person name="Graham D.E."/>
            <person name="Overbeek R."/>
            <person name="Snead M.A."/>
            <person name="Keller M."/>
            <person name="Aujay M."/>
            <person name="Huber R."/>
            <person name="Feldman R.A."/>
            <person name="Short J.M."/>
            <person name="Olsen G.J."/>
            <person name="Swanson R.V."/>
        </authorList>
    </citation>
    <scope>NUCLEOTIDE SEQUENCE [LARGE SCALE GENOMIC DNA]</scope>
    <source>
        <strain>VF5</strain>
    </source>
</reference>
<evidence type="ECO:0000250" key="1">
    <source>
        <dbReference type="UniProtKB" id="P00968"/>
    </source>
</evidence>
<evidence type="ECO:0000255" key="2">
    <source>
        <dbReference type="PROSITE-ProRule" id="PRU00409"/>
    </source>
</evidence>
<evidence type="ECO:0000305" key="3"/>
<feature type="chain" id="PRO_0000144984" description="Carbamoyl phosphate synthase large chain, N-terminal section">
    <location>
        <begin position="1"/>
        <end position="557"/>
    </location>
</feature>
<feature type="domain" description="ATP-grasp" evidence="1">
    <location>
        <begin position="133"/>
        <end position="328"/>
    </location>
</feature>
<feature type="region of interest" description="Carboxyphosphate synthetic domain" evidence="1">
    <location>
        <begin position="1"/>
        <end position="402"/>
    </location>
</feature>
<feature type="region of interest" description="Oligomerization domain" evidence="1">
    <location>
        <begin position="403"/>
        <end position="553"/>
    </location>
</feature>
<feature type="binding site" evidence="1">
    <location>
        <position position="129"/>
    </location>
    <ligand>
        <name>ATP</name>
        <dbReference type="ChEBI" id="CHEBI:30616"/>
        <label>1</label>
    </ligand>
</feature>
<feature type="binding site" evidence="1">
    <location>
        <position position="169"/>
    </location>
    <ligand>
        <name>ATP</name>
        <dbReference type="ChEBI" id="CHEBI:30616"/>
        <label>1</label>
    </ligand>
</feature>
<feature type="binding site" evidence="1">
    <location>
        <position position="175"/>
    </location>
    <ligand>
        <name>ATP</name>
        <dbReference type="ChEBI" id="CHEBI:30616"/>
        <label>1</label>
    </ligand>
</feature>
<feature type="binding site" evidence="1">
    <location>
        <position position="176"/>
    </location>
    <ligand>
        <name>ATP</name>
        <dbReference type="ChEBI" id="CHEBI:30616"/>
        <label>1</label>
    </ligand>
</feature>
<feature type="binding site" evidence="1">
    <location>
        <position position="208"/>
    </location>
    <ligand>
        <name>ATP</name>
        <dbReference type="ChEBI" id="CHEBI:30616"/>
        <label>1</label>
    </ligand>
</feature>
<feature type="binding site" evidence="1">
    <location>
        <position position="210"/>
    </location>
    <ligand>
        <name>ATP</name>
        <dbReference type="ChEBI" id="CHEBI:30616"/>
        <label>1</label>
    </ligand>
</feature>
<feature type="binding site" evidence="1">
    <location>
        <position position="215"/>
    </location>
    <ligand>
        <name>ATP</name>
        <dbReference type="ChEBI" id="CHEBI:30616"/>
        <label>1</label>
    </ligand>
</feature>
<feature type="binding site" evidence="1">
    <location>
        <position position="241"/>
    </location>
    <ligand>
        <name>ATP</name>
        <dbReference type="ChEBI" id="CHEBI:30616"/>
        <label>1</label>
    </ligand>
</feature>
<feature type="binding site" evidence="1">
    <location>
        <position position="242"/>
    </location>
    <ligand>
        <name>ATP</name>
        <dbReference type="ChEBI" id="CHEBI:30616"/>
        <label>1</label>
    </ligand>
</feature>
<feature type="binding site" evidence="1">
    <location>
        <position position="243"/>
    </location>
    <ligand>
        <name>ATP</name>
        <dbReference type="ChEBI" id="CHEBI:30616"/>
        <label>1</label>
    </ligand>
</feature>
<feature type="binding site" evidence="1">
    <location>
        <position position="285"/>
    </location>
    <ligand>
        <name>ATP</name>
        <dbReference type="ChEBI" id="CHEBI:30616"/>
        <label>1</label>
    </ligand>
</feature>
<feature type="binding site" evidence="2">
    <location>
        <position position="285"/>
    </location>
    <ligand>
        <name>Mg(2+)</name>
        <dbReference type="ChEBI" id="CHEBI:18420"/>
        <label>1</label>
    </ligand>
</feature>
<feature type="binding site" evidence="2">
    <location>
        <position position="285"/>
    </location>
    <ligand>
        <name>Mn(2+)</name>
        <dbReference type="ChEBI" id="CHEBI:29035"/>
        <label>1</label>
    </ligand>
</feature>
<feature type="binding site" evidence="1">
    <location>
        <position position="299"/>
    </location>
    <ligand>
        <name>ATP</name>
        <dbReference type="ChEBI" id="CHEBI:30616"/>
        <label>1</label>
    </ligand>
</feature>
<feature type="binding site" evidence="2">
    <location>
        <position position="299"/>
    </location>
    <ligand>
        <name>Mg(2+)</name>
        <dbReference type="ChEBI" id="CHEBI:18420"/>
        <label>1</label>
    </ligand>
</feature>
<feature type="binding site" evidence="2">
    <location>
        <position position="299"/>
    </location>
    <ligand>
        <name>Mg(2+)</name>
        <dbReference type="ChEBI" id="CHEBI:18420"/>
        <label>2</label>
    </ligand>
</feature>
<feature type="binding site" evidence="2">
    <location>
        <position position="299"/>
    </location>
    <ligand>
        <name>Mn(2+)</name>
        <dbReference type="ChEBI" id="CHEBI:29035"/>
        <label>1</label>
    </ligand>
</feature>
<feature type="binding site" evidence="2">
    <location>
        <position position="299"/>
    </location>
    <ligand>
        <name>Mn(2+)</name>
        <dbReference type="ChEBI" id="CHEBI:29035"/>
        <label>2</label>
    </ligand>
</feature>
<feature type="binding site" evidence="2">
    <location>
        <position position="301"/>
    </location>
    <ligand>
        <name>Mg(2+)</name>
        <dbReference type="ChEBI" id="CHEBI:18420"/>
        <label>2</label>
    </ligand>
</feature>
<feature type="binding site" evidence="2">
    <location>
        <position position="301"/>
    </location>
    <ligand>
        <name>Mn(2+)</name>
        <dbReference type="ChEBI" id="CHEBI:29035"/>
        <label>2</label>
    </ligand>
</feature>
<gene>
    <name type="primary">carB1</name>
    <name type="ordered locus">aq_2101</name>
</gene>
<keyword id="KW-0028">Amino-acid biosynthesis</keyword>
<keyword id="KW-0055">Arginine biosynthesis</keyword>
<keyword id="KW-0067">ATP-binding</keyword>
<keyword id="KW-0436">Ligase</keyword>
<keyword id="KW-0460">Magnesium</keyword>
<keyword id="KW-0464">Manganese</keyword>
<keyword id="KW-0479">Metal-binding</keyword>
<keyword id="KW-0547">Nucleotide-binding</keyword>
<keyword id="KW-0665">Pyrimidine biosynthesis</keyword>
<keyword id="KW-1185">Reference proteome</keyword>
<name>CARB1_AQUAE</name>
<accession>O67869</accession>
<dbReference type="EC" id="6.3.4.16" evidence="1"/>
<dbReference type="EC" id="6.3.5.5" evidence="1"/>
<dbReference type="EMBL" id="AE000657">
    <property type="protein sequence ID" value="AAC07826.1"/>
    <property type="molecule type" value="Genomic_DNA"/>
</dbReference>
<dbReference type="PIR" id="A70480">
    <property type="entry name" value="A70480"/>
</dbReference>
<dbReference type="RefSeq" id="NP_214438.1">
    <property type="nucleotide sequence ID" value="NC_000918.1"/>
</dbReference>
<dbReference type="RefSeq" id="WP_010881374.1">
    <property type="nucleotide sequence ID" value="NC_000918.1"/>
</dbReference>
<dbReference type="SMR" id="O67869"/>
<dbReference type="FunCoup" id="O67869">
    <property type="interactions" value="443"/>
</dbReference>
<dbReference type="STRING" id="224324.aq_2101"/>
<dbReference type="EnsemblBacteria" id="AAC07826">
    <property type="protein sequence ID" value="AAC07826"/>
    <property type="gene ID" value="aq_2101"/>
</dbReference>
<dbReference type="KEGG" id="aae:aq_2101"/>
<dbReference type="PATRIC" id="fig|224324.8.peg.1620"/>
<dbReference type="eggNOG" id="COG0458">
    <property type="taxonomic scope" value="Bacteria"/>
</dbReference>
<dbReference type="HOGENOM" id="CLU_000513_1_1_0"/>
<dbReference type="InParanoid" id="O67869"/>
<dbReference type="OrthoDB" id="9804197at2"/>
<dbReference type="UniPathway" id="UPA00068">
    <property type="reaction ID" value="UER00171"/>
</dbReference>
<dbReference type="UniPathway" id="UPA00070">
    <property type="reaction ID" value="UER00115"/>
</dbReference>
<dbReference type="Proteomes" id="UP000000798">
    <property type="component" value="Chromosome"/>
</dbReference>
<dbReference type="GO" id="GO:0005524">
    <property type="term" value="F:ATP binding"/>
    <property type="evidence" value="ECO:0007669"/>
    <property type="project" value="UniProtKB-KW"/>
</dbReference>
<dbReference type="GO" id="GO:0004087">
    <property type="term" value="F:carbamoyl-phosphate synthase (ammonia) activity"/>
    <property type="evidence" value="ECO:0007669"/>
    <property type="project" value="RHEA"/>
</dbReference>
<dbReference type="GO" id="GO:0004088">
    <property type="term" value="F:carbamoyl-phosphate synthase (glutamine-hydrolyzing) activity"/>
    <property type="evidence" value="ECO:0007669"/>
    <property type="project" value="UniProtKB-EC"/>
</dbReference>
<dbReference type="GO" id="GO:0046872">
    <property type="term" value="F:metal ion binding"/>
    <property type="evidence" value="ECO:0007669"/>
    <property type="project" value="UniProtKB-KW"/>
</dbReference>
<dbReference type="GO" id="GO:0044205">
    <property type="term" value="P:'de novo' UMP biosynthetic process"/>
    <property type="evidence" value="ECO:0007669"/>
    <property type="project" value="UniProtKB-UniPathway"/>
</dbReference>
<dbReference type="GO" id="GO:0006526">
    <property type="term" value="P:L-arginine biosynthetic process"/>
    <property type="evidence" value="ECO:0007669"/>
    <property type="project" value="UniProtKB-UniPathway"/>
</dbReference>
<dbReference type="FunFam" id="1.10.1030.10:FF:000002">
    <property type="entry name" value="Carbamoyl-phosphate synthase large chain"/>
    <property type="match status" value="1"/>
</dbReference>
<dbReference type="FunFam" id="3.30.470.20:FF:000007">
    <property type="entry name" value="Carbamoyl-phosphate synthase large chain"/>
    <property type="match status" value="1"/>
</dbReference>
<dbReference type="FunFam" id="3.40.50.20:FF:000001">
    <property type="entry name" value="Carbamoyl-phosphate synthase large chain"/>
    <property type="match status" value="1"/>
</dbReference>
<dbReference type="Gene3D" id="3.40.50.20">
    <property type="match status" value="1"/>
</dbReference>
<dbReference type="Gene3D" id="3.30.470.20">
    <property type="entry name" value="ATP-grasp fold, B domain"/>
    <property type="match status" value="1"/>
</dbReference>
<dbReference type="Gene3D" id="1.10.1030.10">
    <property type="entry name" value="Carbamoyl-phosphate synthetase, large subunit oligomerisation domain"/>
    <property type="match status" value="1"/>
</dbReference>
<dbReference type="InterPro" id="IPR011761">
    <property type="entry name" value="ATP-grasp"/>
</dbReference>
<dbReference type="InterPro" id="IPR005480">
    <property type="entry name" value="CarbamoylP_synth_lsu_oligo"/>
</dbReference>
<dbReference type="InterPro" id="IPR036897">
    <property type="entry name" value="CarbamoylP_synth_lsu_oligo_sf"/>
</dbReference>
<dbReference type="InterPro" id="IPR005479">
    <property type="entry name" value="CbamoylP_synth_lsu-like_ATP-bd"/>
</dbReference>
<dbReference type="InterPro" id="IPR005483">
    <property type="entry name" value="CbamoylP_synth_lsu_CPSase_dom"/>
</dbReference>
<dbReference type="InterPro" id="IPR016185">
    <property type="entry name" value="PreATP-grasp_dom_sf"/>
</dbReference>
<dbReference type="NCBIfam" id="NF003671">
    <property type="entry name" value="PRK05294.1"/>
    <property type="match status" value="1"/>
</dbReference>
<dbReference type="NCBIfam" id="NF009455">
    <property type="entry name" value="PRK12815.1"/>
    <property type="match status" value="1"/>
</dbReference>
<dbReference type="PANTHER" id="PTHR11405:SF53">
    <property type="entry name" value="CARBAMOYL-PHOSPHATE SYNTHASE [AMMONIA], MITOCHONDRIAL"/>
    <property type="match status" value="1"/>
</dbReference>
<dbReference type="PANTHER" id="PTHR11405">
    <property type="entry name" value="CARBAMOYLTRANSFERASE FAMILY MEMBER"/>
    <property type="match status" value="1"/>
</dbReference>
<dbReference type="Pfam" id="PF02786">
    <property type="entry name" value="CPSase_L_D2"/>
    <property type="match status" value="1"/>
</dbReference>
<dbReference type="Pfam" id="PF02787">
    <property type="entry name" value="CPSase_L_D3"/>
    <property type="match status" value="1"/>
</dbReference>
<dbReference type="PRINTS" id="PR00098">
    <property type="entry name" value="CPSASE"/>
</dbReference>
<dbReference type="SMART" id="SM01096">
    <property type="entry name" value="CPSase_L_D3"/>
    <property type="match status" value="1"/>
</dbReference>
<dbReference type="SUPFAM" id="SSF48108">
    <property type="entry name" value="Carbamoyl phosphate synthetase, large subunit connection domain"/>
    <property type="match status" value="1"/>
</dbReference>
<dbReference type="SUPFAM" id="SSF56059">
    <property type="entry name" value="Glutathione synthetase ATP-binding domain-like"/>
    <property type="match status" value="1"/>
</dbReference>
<dbReference type="SUPFAM" id="SSF52440">
    <property type="entry name" value="PreATP-grasp domain"/>
    <property type="match status" value="1"/>
</dbReference>
<dbReference type="PROSITE" id="PS50975">
    <property type="entry name" value="ATP_GRASP"/>
    <property type="match status" value="1"/>
</dbReference>
<dbReference type="PROSITE" id="PS00866">
    <property type="entry name" value="CPSASE_1"/>
    <property type="match status" value="1"/>
</dbReference>
<dbReference type="PROSITE" id="PS00867">
    <property type="entry name" value="CPSASE_2"/>
    <property type="match status" value="1"/>
</dbReference>
<protein>
    <recommendedName>
        <fullName evidence="3">Carbamoyl phosphate synthase large chain, N-terminal section</fullName>
        <ecNumber evidence="1">6.3.4.16</ecNumber>
        <ecNumber evidence="1">6.3.5.5</ecNumber>
    </recommendedName>
    <alternativeName>
        <fullName>Carbamoyl phosphate synthetase ammonia chain</fullName>
    </alternativeName>
</protein>
<organism>
    <name type="scientific">Aquifex aeolicus (strain VF5)</name>
    <dbReference type="NCBI Taxonomy" id="224324"/>
    <lineage>
        <taxon>Bacteria</taxon>
        <taxon>Pseudomonadati</taxon>
        <taxon>Aquificota</taxon>
        <taxon>Aquificia</taxon>
        <taxon>Aquificales</taxon>
        <taxon>Aquificaceae</taxon>
        <taxon>Aquifex</taxon>
    </lineage>
</organism>
<sequence>MPKRTDIKKILIIGSGPIVIGQAAEFDYSGTQACKALKQEGYEVILVNSNPATIMTDPEMADKTYIEPLTADILEEIIKKERPDALLPTLGGQTGLNLAVELYENGVLERYGVELIGANYEAIKKGEDRELFKETMESIGLKVPESAVVRSVEEGLKAVEKIGFPVILRPAFTLGGTGSSVAYNVEEFKEKLKVALETSPIHEVLLDKSLIGWKEIEFEVVRDKADNVIIVCAIENFDPMGVHTGDSITVAPTQTLTDKEYQMLRDAAIAVIRAIGVDTGGSNIQFALSPESGDFYVIEMNPRVSRSSALASKATGFPIAKVAAKLAVGYTLDELKNDITKFTPASFEPSIDYVVVKIPRFDFAKFPEADRTLTTMMKSVGEVMAIGRTFKEALLKAVRSLELDRYGLAFPKLTNVDKVELERNLINPNDQRLWYIAEAFRRGYSVDEVYELTKIDRWFLYNIEEIVKFEEVLRKEELTPEILRQAKEMGYSDWEIAKIKGITEEEVRKLRKEEGIVPTFKGVDTCAGEFVAYTPYYYSSYERPYYTVDGQEILDED</sequence>